<organism>
    <name type="scientific">Shewanella sp. (strain W3-18-1)</name>
    <dbReference type="NCBI Taxonomy" id="351745"/>
    <lineage>
        <taxon>Bacteria</taxon>
        <taxon>Pseudomonadati</taxon>
        <taxon>Pseudomonadota</taxon>
        <taxon>Gammaproteobacteria</taxon>
        <taxon>Alteromonadales</taxon>
        <taxon>Shewanellaceae</taxon>
        <taxon>Shewanella</taxon>
    </lineage>
</organism>
<dbReference type="EC" id="2.1.1.-" evidence="1"/>
<dbReference type="EMBL" id="CP000503">
    <property type="protein sequence ID" value="ABM23348.1"/>
    <property type="molecule type" value="Genomic_DNA"/>
</dbReference>
<dbReference type="RefSeq" id="WP_011787884.1">
    <property type="nucleotide sequence ID" value="NC_008750.1"/>
</dbReference>
<dbReference type="SMR" id="A1RFA3"/>
<dbReference type="GeneID" id="67445018"/>
<dbReference type="KEGG" id="shw:Sputw3181_0497"/>
<dbReference type="HOGENOM" id="CLU_049382_4_1_6"/>
<dbReference type="Proteomes" id="UP000002597">
    <property type="component" value="Chromosome"/>
</dbReference>
<dbReference type="GO" id="GO:0005829">
    <property type="term" value="C:cytosol"/>
    <property type="evidence" value="ECO:0007669"/>
    <property type="project" value="TreeGrafter"/>
</dbReference>
<dbReference type="GO" id="GO:0016279">
    <property type="term" value="F:protein-lysine N-methyltransferase activity"/>
    <property type="evidence" value="ECO:0007669"/>
    <property type="project" value="TreeGrafter"/>
</dbReference>
<dbReference type="GO" id="GO:0032259">
    <property type="term" value="P:methylation"/>
    <property type="evidence" value="ECO:0007669"/>
    <property type="project" value="UniProtKB-KW"/>
</dbReference>
<dbReference type="CDD" id="cd02440">
    <property type="entry name" value="AdoMet_MTases"/>
    <property type="match status" value="1"/>
</dbReference>
<dbReference type="Gene3D" id="3.40.50.150">
    <property type="entry name" value="Vaccinia Virus protein VP39"/>
    <property type="match status" value="1"/>
</dbReference>
<dbReference type="HAMAP" id="MF_00735">
    <property type="entry name" value="Methyltr_PrmA"/>
    <property type="match status" value="1"/>
</dbReference>
<dbReference type="InterPro" id="IPR050078">
    <property type="entry name" value="Ribosomal_L11_MeTrfase_PrmA"/>
</dbReference>
<dbReference type="InterPro" id="IPR004498">
    <property type="entry name" value="Ribosomal_PrmA_MeTrfase"/>
</dbReference>
<dbReference type="InterPro" id="IPR029063">
    <property type="entry name" value="SAM-dependent_MTases_sf"/>
</dbReference>
<dbReference type="NCBIfam" id="TIGR00406">
    <property type="entry name" value="prmA"/>
    <property type="match status" value="1"/>
</dbReference>
<dbReference type="PANTHER" id="PTHR43648">
    <property type="entry name" value="ELECTRON TRANSFER FLAVOPROTEIN BETA SUBUNIT LYSINE METHYLTRANSFERASE"/>
    <property type="match status" value="1"/>
</dbReference>
<dbReference type="PANTHER" id="PTHR43648:SF1">
    <property type="entry name" value="ELECTRON TRANSFER FLAVOPROTEIN BETA SUBUNIT LYSINE METHYLTRANSFERASE"/>
    <property type="match status" value="1"/>
</dbReference>
<dbReference type="Pfam" id="PF06325">
    <property type="entry name" value="PrmA"/>
    <property type="match status" value="1"/>
</dbReference>
<dbReference type="PIRSF" id="PIRSF000401">
    <property type="entry name" value="RPL11_MTase"/>
    <property type="match status" value="1"/>
</dbReference>
<dbReference type="SUPFAM" id="SSF53335">
    <property type="entry name" value="S-adenosyl-L-methionine-dependent methyltransferases"/>
    <property type="match status" value="1"/>
</dbReference>
<accession>A1RFA3</accession>
<feature type="chain" id="PRO_1000046093" description="Ribosomal protein L11 methyltransferase">
    <location>
        <begin position="1"/>
        <end position="293"/>
    </location>
</feature>
<feature type="binding site" evidence="1">
    <location>
        <position position="145"/>
    </location>
    <ligand>
        <name>S-adenosyl-L-methionine</name>
        <dbReference type="ChEBI" id="CHEBI:59789"/>
    </ligand>
</feature>
<feature type="binding site" evidence="1">
    <location>
        <position position="166"/>
    </location>
    <ligand>
        <name>S-adenosyl-L-methionine</name>
        <dbReference type="ChEBI" id="CHEBI:59789"/>
    </ligand>
</feature>
<feature type="binding site" evidence="1">
    <location>
        <position position="188"/>
    </location>
    <ligand>
        <name>S-adenosyl-L-methionine</name>
        <dbReference type="ChEBI" id="CHEBI:59789"/>
    </ligand>
</feature>
<feature type="binding site" evidence="1">
    <location>
        <position position="230"/>
    </location>
    <ligand>
        <name>S-adenosyl-L-methionine</name>
        <dbReference type="ChEBI" id="CHEBI:59789"/>
    </ligand>
</feature>
<reference key="1">
    <citation type="submission" date="2006-12" db="EMBL/GenBank/DDBJ databases">
        <title>Complete sequence of Shewanella sp. W3-18-1.</title>
        <authorList>
            <consortium name="US DOE Joint Genome Institute"/>
            <person name="Copeland A."/>
            <person name="Lucas S."/>
            <person name="Lapidus A."/>
            <person name="Barry K."/>
            <person name="Detter J.C."/>
            <person name="Glavina del Rio T."/>
            <person name="Hammon N."/>
            <person name="Israni S."/>
            <person name="Dalin E."/>
            <person name="Tice H."/>
            <person name="Pitluck S."/>
            <person name="Chain P."/>
            <person name="Malfatti S."/>
            <person name="Shin M."/>
            <person name="Vergez L."/>
            <person name="Schmutz J."/>
            <person name="Larimer F."/>
            <person name="Land M."/>
            <person name="Hauser L."/>
            <person name="Kyrpides N."/>
            <person name="Lykidis A."/>
            <person name="Tiedje J."/>
            <person name="Richardson P."/>
        </authorList>
    </citation>
    <scope>NUCLEOTIDE SEQUENCE [LARGE SCALE GENOMIC DNA]</scope>
    <source>
        <strain>W3-18-1</strain>
    </source>
</reference>
<comment type="function">
    <text evidence="1">Methylates ribosomal protein L11.</text>
</comment>
<comment type="catalytic activity">
    <reaction evidence="1">
        <text>L-lysyl-[protein] + 3 S-adenosyl-L-methionine = N(6),N(6),N(6)-trimethyl-L-lysyl-[protein] + 3 S-adenosyl-L-homocysteine + 3 H(+)</text>
        <dbReference type="Rhea" id="RHEA:54192"/>
        <dbReference type="Rhea" id="RHEA-COMP:9752"/>
        <dbReference type="Rhea" id="RHEA-COMP:13826"/>
        <dbReference type="ChEBI" id="CHEBI:15378"/>
        <dbReference type="ChEBI" id="CHEBI:29969"/>
        <dbReference type="ChEBI" id="CHEBI:57856"/>
        <dbReference type="ChEBI" id="CHEBI:59789"/>
        <dbReference type="ChEBI" id="CHEBI:61961"/>
    </reaction>
</comment>
<comment type="subcellular location">
    <subcellularLocation>
        <location evidence="1">Cytoplasm</location>
    </subcellularLocation>
</comment>
<comment type="similarity">
    <text evidence="1">Belongs to the methyltransferase superfamily. PrmA family.</text>
</comment>
<sequence length="293" mass="32596">MPWIQLRINTNSDDAETISDLLMEEGSVSITFEDGKDTPIFEPKLGETPLWRDTVVVALFEADTDLTPTIEMLKTLPFLGDNFSHKIEQIEDKDWVREWMDNFHPIQFGSRLWICPSWREIPDPTAVNVILDPGLAFGTGTHPTTALCLEWLDSLDLSNEEVIDFGCGSGILAVAALKLGAKKVTGIDIDYQAIDASRANAERNNVADKLALYLPEDQPADLKADVLVANILAGPLRELAPLIAERVKSGGKLALSGLLKEQAQEISDFYSQWFDMDEAAHKEDWSRLTGKRK</sequence>
<name>PRMA_SHESW</name>
<protein>
    <recommendedName>
        <fullName evidence="1">Ribosomal protein L11 methyltransferase</fullName>
        <shortName evidence="1">L11 Mtase</shortName>
        <ecNumber evidence="1">2.1.1.-</ecNumber>
    </recommendedName>
</protein>
<evidence type="ECO:0000255" key="1">
    <source>
        <dbReference type="HAMAP-Rule" id="MF_00735"/>
    </source>
</evidence>
<keyword id="KW-0963">Cytoplasm</keyword>
<keyword id="KW-0489">Methyltransferase</keyword>
<keyword id="KW-0949">S-adenosyl-L-methionine</keyword>
<keyword id="KW-0808">Transferase</keyword>
<proteinExistence type="inferred from homology"/>
<gene>
    <name evidence="1" type="primary">prmA</name>
    <name type="ordered locus">Sputw3181_0497</name>
</gene>